<organism>
    <name type="scientific">Desulfitobacterium hafniense (strain Y51)</name>
    <dbReference type="NCBI Taxonomy" id="138119"/>
    <lineage>
        <taxon>Bacteria</taxon>
        <taxon>Bacillati</taxon>
        <taxon>Bacillota</taxon>
        <taxon>Clostridia</taxon>
        <taxon>Eubacteriales</taxon>
        <taxon>Desulfitobacteriaceae</taxon>
        <taxon>Desulfitobacterium</taxon>
    </lineage>
</organism>
<evidence type="ECO:0000255" key="1">
    <source>
        <dbReference type="HAMAP-Rule" id="MF_00135"/>
    </source>
</evidence>
<comment type="catalytic activity">
    <reaction evidence="1">
        <text>N-(5-phospho-beta-D-ribosyl)anthranilate = 1-(2-carboxyphenylamino)-1-deoxy-D-ribulose 5-phosphate</text>
        <dbReference type="Rhea" id="RHEA:21540"/>
        <dbReference type="ChEBI" id="CHEBI:18277"/>
        <dbReference type="ChEBI" id="CHEBI:58613"/>
        <dbReference type="EC" id="5.3.1.24"/>
    </reaction>
</comment>
<comment type="pathway">
    <text evidence="1">Amino-acid biosynthesis; L-tryptophan biosynthesis; L-tryptophan from chorismate: step 3/5.</text>
</comment>
<comment type="similarity">
    <text evidence="1">Belongs to the TrpF family.</text>
</comment>
<dbReference type="EC" id="5.3.1.24" evidence="1"/>
<dbReference type="EMBL" id="AP008230">
    <property type="protein sequence ID" value="BAE84987.1"/>
    <property type="molecule type" value="Genomic_DNA"/>
</dbReference>
<dbReference type="RefSeq" id="WP_011460913.1">
    <property type="nucleotide sequence ID" value="NC_007907.1"/>
</dbReference>
<dbReference type="SMR" id="Q24SK5"/>
<dbReference type="STRING" id="138119.DSY3198"/>
<dbReference type="KEGG" id="dsy:DSY3198"/>
<dbReference type="eggNOG" id="COG0135">
    <property type="taxonomic scope" value="Bacteria"/>
</dbReference>
<dbReference type="HOGENOM" id="CLU_076364_2_0_9"/>
<dbReference type="UniPathway" id="UPA00035">
    <property type="reaction ID" value="UER00042"/>
</dbReference>
<dbReference type="Proteomes" id="UP000001946">
    <property type="component" value="Chromosome"/>
</dbReference>
<dbReference type="GO" id="GO:0004640">
    <property type="term" value="F:phosphoribosylanthranilate isomerase activity"/>
    <property type="evidence" value="ECO:0007669"/>
    <property type="project" value="UniProtKB-UniRule"/>
</dbReference>
<dbReference type="GO" id="GO:0000162">
    <property type="term" value="P:L-tryptophan biosynthetic process"/>
    <property type="evidence" value="ECO:0007669"/>
    <property type="project" value="UniProtKB-UniRule"/>
</dbReference>
<dbReference type="CDD" id="cd00405">
    <property type="entry name" value="PRAI"/>
    <property type="match status" value="1"/>
</dbReference>
<dbReference type="Gene3D" id="3.20.20.70">
    <property type="entry name" value="Aldolase class I"/>
    <property type="match status" value="1"/>
</dbReference>
<dbReference type="HAMAP" id="MF_00135">
    <property type="entry name" value="PRAI"/>
    <property type="match status" value="1"/>
</dbReference>
<dbReference type="InterPro" id="IPR013785">
    <property type="entry name" value="Aldolase_TIM"/>
</dbReference>
<dbReference type="InterPro" id="IPR001240">
    <property type="entry name" value="PRAI_dom"/>
</dbReference>
<dbReference type="InterPro" id="IPR011060">
    <property type="entry name" value="RibuloseP-bd_barrel"/>
</dbReference>
<dbReference type="InterPro" id="IPR044643">
    <property type="entry name" value="TrpF_fam"/>
</dbReference>
<dbReference type="PANTHER" id="PTHR42894">
    <property type="entry name" value="N-(5'-PHOSPHORIBOSYL)ANTHRANILATE ISOMERASE"/>
    <property type="match status" value="1"/>
</dbReference>
<dbReference type="PANTHER" id="PTHR42894:SF1">
    <property type="entry name" value="N-(5'-PHOSPHORIBOSYL)ANTHRANILATE ISOMERASE"/>
    <property type="match status" value="1"/>
</dbReference>
<dbReference type="Pfam" id="PF00697">
    <property type="entry name" value="PRAI"/>
    <property type="match status" value="1"/>
</dbReference>
<dbReference type="SUPFAM" id="SSF51366">
    <property type="entry name" value="Ribulose-phoshate binding barrel"/>
    <property type="match status" value="1"/>
</dbReference>
<feature type="chain" id="PRO_1000018593" description="N-(5'-phosphoribosyl)anthranilate isomerase">
    <location>
        <begin position="1"/>
        <end position="237"/>
    </location>
</feature>
<sequence length="237" mass="25749">MPRIKICGIRTGEEARWAVEAGADALGFIFVPHSKRYIQPETAREIILNLPPLISKVGVFAQASPEHVGRIVHECSLDTIQLHGNEDPRLYRHLSVTKIKAFSFPSAPAPGNSSEAAPDFSLVETSPSSSLPTSFRELPPASLHGILLDSSAGGRTGGTGIPLPWHTPVFQDFLHQVGDLGYPLILAGGLNPDNILEAIRLTRPYGVDVSSGVERNGRKDREKIQHFISQARKESPL</sequence>
<gene>
    <name evidence="1" type="primary">trpF</name>
    <name type="ordered locus">DSY3198</name>
</gene>
<accession>Q24SK5</accession>
<keyword id="KW-0028">Amino-acid biosynthesis</keyword>
<keyword id="KW-0057">Aromatic amino acid biosynthesis</keyword>
<keyword id="KW-0413">Isomerase</keyword>
<keyword id="KW-1185">Reference proteome</keyword>
<keyword id="KW-0822">Tryptophan biosynthesis</keyword>
<protein>
    <recommendedName>
        <fullName evidence="1">N-(5'-phosphoribosyl)anthranilate isomerase</fullName>
        <shortName evidence="1">PRAI</shortName>
        <ecNumber evidence="1">5.3.1.24</ecNumber>
    </recommendedName>
</protein>
<name>TRPF_DESHY</name>
<reference key="1">
    <citation type="journal article" date="2006" name="J. Bacteriol.">
        <title>Complete genome sequence of the dehalorespiring bacterium Desulfitobacterium hafniense Y51 and comparison with Dehalococcoides ethenogenes 195.</title>
        <authorList>
            <person name="Nonaka H."/>
            <person name="Keresztes G."/>
            <person name="Shinoda Y."/>
            <person name="Ikenaga Y."/>
            <person name="Abe M."/>
            <person name="Naito K."/>
            <person name="Inatomi K."/>
            <person name="Furukawa K."/>
            <person name="Inui M."/>
            <person name="Yukawa H."/>
        </authorList>
    </citation>
    <scope>NUCLEOTIDE SEQUENCE [LARGE SCALE GENOMIC DNA]</scope>
    <source>
        <strain>Y51</strain>
    </source>
</reference>
<proteinExistence type="inferred from homology"/>